<protein>
    <recommendedName>
        <fullName evidence="1">Glucose-1-phosphate adenylyltransferase</fullName>
        <ecNumber evidence="1">2.7.7.27</ecNumber>
    </recommendedName>
    <alternativeName>
        <fullName evidence="1">ADP-glucose pyrophosphorylase</fullName>
        <shortName evidence="1">ADPGlc PPase</shortName>
    </alternativeName>
    <alternativeName>
        <fullName evidence="1">ADP-glucose synthase</fullName>
    </alternativeName>
</protein>
<sequence length="423" mass="47540">MDNHNSSHQLYKKAMALVLAGGRGSRLYNLTDTRAKPAVYFGGKFRIIDFALSNCLNSGIRRIGVVTQYKSHSLLRHLQRGWGFLRGELNEFIDLLPAQQRVDEEHWYRGTADAVYQNIDILRSYGPEYVIVLAGDHIYKMDYSIMLRDHAQSGYKCTVGCVEIAKEEAYAFGIMGIDENRKITSFIEKPKKNAPTIPGTTDRCYASMGIYIFNSDYLYDLLEEDITNKESSHDFGKDIIPRVVSENQALAHPFSMSCVPRGEGIEPYWRDVGTIDAFWEANLDLAANMPELNIYDKDWPVWTAQEQLPPAKFVPDRNGNHGVITNTLASGGCIVLGSEISKSLMFSKVRVLAGCKIDQCVIMPEVVVGENCRLKKVVIDKGCDIPAGMVIGEDPIEDAKNFYRTDKGVVLVTKKMIDELKEK</sequence>
<name>GLGC_FRATH</name>
<dbReference type="EC" id="2.7.7.27" evidence="1"/>
<dbReference type="EMBL" id="AM233362">
    <property type="protein sequence ID" value="CAJ78925.1"/>
    <property type="molecule type" value="Genomic_DNA"/>
</dbReference>
<dbReference type="RefSeq" id="WP_003033234.1">
    <property type="nucleotide sequence ID" value="NZ_CP009694.1"/>
</dbReference>
<dbReference type="SMR" id="Q2A4U5"/>
<dbReference type="KEGG" id="ftl:FTL_0485"/>
<dbReference type="UniPathway" id="UPA00164"/>
<dbReference type="Proteomes" id="UP000001944">
    <property type="component" value="Chromosome"/>
</dbReference>
<dbReference type="GO" id="GO:0005524">
    <property type="term" value="F:ATP binding"/>
    <property type="evidence" value="ECO:0007669"/>
    <property type="project" value="UniProtKB-KW"/>
</dbReference>
<dbReference type="GO" id="GO:0008878">
    <property type="term" value="F:glucose-1-phosphate adenylyltransferase activity"/>
    <property type="evidence" value="ECO:0007669"/>
    <property type="project" value="UniProtKB-UniRule"/>
</dbReference>
<dbReference type="GO" id="GO:0005978">
    <property type="term" value="P:glycogen biosynthetic process"/>
    <property type="evidence" value="ECO:0007669"/>
    <property type="project" value="UniProtKB-UniRule"/>
</dbReference>
<dbReference type="CDD" id="cd02508">
    <property type="entry name" value="ADP_Glucose_PP"/>
    <property type="match status" value="1"/>
</dbReference>
<dbReference type="CDD" id="cd04651">
    <property type="entry name" value="LbH_G1P_AT_C"/>
    <property type="match status" value="1"/>
</dbReference>
<dbReference type="Gene3D" id="2.160.10.10">
    <property type="entry name" value="Hexapeptide repeat proteins"/>
    <property type="match status" value="1"/>
</dbReference>
<dbReference type="Gene3D" id="3.90.550.10">
    <property type="entry name" value="Spore Coat Polysaccharide Biosynthesis Protein SpsA, Chain A"/>
    <property type="match status" value="1"/>
</dbReference>
<dbReference type="HAMAP" id="MF_00624">
    <property type="entry name" value="GlgC"/>
    <property type="match status" value="1"/>
</dbReference>
<dbReference type="InterPro" id="IPR011831">
    <property type="entry name" value="ADP-Glc_PPase"/>
</dbReference>
<dbReference type="InterPro" id="IPR005836">
    <property type="entry name" value="ADP_Glu_pyroP_CS"/>
</dbReference>
<dbReference type="InterPro" id="IPR023049">
    <property type="entry name" value="GlgC_bac"/>
</dbReference>
<dbReference type="InterPro" id="IPR056818">
    <property type="entry name" value="GlmU/GlgC-like_hexapep"/>
</dbReference>
<dbReference type="InterPro" id="IPR005835">
    <property type="entry name" value="NTP_transferase_dom"/>
</dbReference>
<dbReference type="InterPro" id="IPR029044">
    <property type="entry name" value="Nucleotide-diphossugar_trans"/>
</dbReference>
<dbReference type="InterPro" id="IPR011004">
    <property type="entry name" value="Trimer_LpxA-like_sf"/>
</dbReference>
<dbReference type="NCBIfam" id="TIGR02091">
    <property type="entry name" value="glgC"/>
    <property type="match status" value="1"/>
</dbReference>
<dbReference type="NCBIfam" id="NF001947">
    <property type="entry name" value="PRK00725.1"/>
    <property type="match status" value="1"/>
</dbReference>
<dbReference type="NCBIfam" id="NF002023">
    <property type="entry name" value="PRK00844.1"/>
    <property type="match status" value="1"/>
</dbReference>
<dbReference type="PANTHER" id="PTHR43523:SF2">
    <property type="entry name" value="GLUCOSE-1-PHOSPHATE ADENYLYLTRANSFERASE"/>
    <property type="match status" value="1"/>
</dbReference>
<dbReference type="PANTHER" id="PTHR43523">
    <property type="entry name" value="GLUCOSE-1-PHOSPHATE ADENYLYLTRANSFERASE-RELATED"/>
    <property type="match status" value="1"/>
</dbReference>
<dbReference type="Pfam" id="PF24894">
    <property type="entry name" value="Hexapep_GlmU"/>
    <property type="match status" value="1"/>
</dbReference>
<dbReference type="Pfam" id="PF00483">
    <property type="entry name" value="NTP_transferase"/>
    <property type="match status" value="1"/>
</dbReference>
<dbReference type="SUPFAM" id="SSF53448">
    <property type="entry name" value="Nucleotide-diphospho-sugar transferases"/>
    <property type="match status" value="1"/>
</dbReference>
<dbReference type="SUPFAM" id="SSF51161">
    <property type="entry name" value="Trimeric LpxA-like enzymes"/>
    <property type="match status" value="1"/>
</dbReference>
<dbReference type="PROSITE" id="PS00808">
    <property type="entry name" value="ADP_GLC_PYROPHOSPH_1"/>
    <property type="match status" value="1"/>
</dbReference>
<dbReference type="PROSITE" id="PS00809">
    <property type="entry name" value="ADP_GLC_PYROPHOSPH_2"/>
    <property type="match status" value="1"/>
</dbReference>
<dbReference type="PROSITE" id="PS00810">
    <property type="entry name" value="ADP_GLC_PYROPHOSPH_3"/>
    <property type="match status" value="1"/>
</dbReference>
<comment type="function">
    <text evidence="1">Involved in the biosynthesis of ADP-glucose, a building block required for the elongation reactions to produce glycogen. Catalyzes the reaction between ATP and alpha-D-glucose 1-phosphate (G1P) to produce pyrophosphate and ADP-Glc.</text>
</comment>
<comment type="catalytic activity">
    <reaction evidence="1">
        <text>alpha-D-glucose 1-phosphate + ATP + H(+) = ADP-alpha-D-glucose + diphosphate</text>
        <dbReference type="Rhea" id="RHEA:12120"/>
        <dbReference type="ChEBI" id="CHEBI:15378"/>
        <dbReference type="ChEBI" id="CHEBI:30616"/>
        <dbReference type="ChEBI" id="CHEBI:33019"/>
        <dbReference type="ChEBI" id="CHEBI:57498"/>
        <dbReference type="ChEBI" id="CHEBI:58601"/>
        <dbReference type="EC" id="2.7.7.27"/>
    </reaction>
</comment>
<comment type="pathway">
    <text evidence="1">Glycan biosynthesis; glycogen biosynthesis.</text>
</comment>
<comment type="subunit">
    <text evidence="1">Homotetramer.</text>
</comment>
<comment type="similarity">
    <text evidence="1">Belongs to the bacterial/plant glucose-1-phosphate adenylyltransferase family.</text>
</comment>
<accession>Q2A4U5</accession>
<gene>
    <name evidence="1" type="primary">glgC</name>
    <name type="ordered locus">FTL_0485</name>
</gene>
<reference key="1">
    <citation type="submission" date="2006-03" db="EMBL/GenBank/DDBJ databases">
        <title>Complete genome sequence of Francisella tularensis LVS (Live Vaccine Strain).</title>
        <authorList>
            <person name="Chain P."/>
            <person name="Larimer F."/>
            <person name="Land M."/>
            <person name="Stilwagen S."/>
            <person name="Larsson P."/>
            <person name="Bearden S."/>
            <person name="Chu M."/>
            <person name="Oyston P."/>
            <person name="Forsman M."/>
            <person name="Andersson S."/>
            <person name="Lindler L."/>
            <person name="Titball R."/>
            <person name="Garcia E."/>
        </authorList>
    </citation>
    <scope>NUCLEOTIDE SEQUENCE [LARGE SCALE GENOMIC DNA]</scope>
    <source>
        <strain>LVS</strain>
    </source>
</reference>
<organism>
    <name type="scientific">Francisella tularensis subsp. holarctica (strain LVS)</name>
    <dbReference type="NCBI Taxonomy" id="376619"/>
    <lineage>
        <taxon>Bacteria</taxon>
        <taxon>Pseudomonadati</taxon>
        <taxon>Pseudomonadota</taxon>
        <taxon>Gammaproteobacteria</taxon>
        <taxon>Thiotrichales</taxon>
        <taxon>Francisellaceae</taxon>
        <taxon>Francisella</taxon>
    </lineage>
</organism>
<feature type="chain" id="PRO_0000261869" description="Glucose-1-phosphate adenylyltransferase">
    <location>
        <begin position="1"/>
        <end position="423"/>
    </location>
</feature>
<feature type="binding site" evidence="1">
    <location>
        <position position="108"/>
    </location>
    <ligand>
        <name>alpha-D-glucose 1-phosphate</name>
        <dbReference type="ChEBI" id="CHEBI:58601"/>
    </ligand>
</feature>
<feature type="binding site" evidence="1">
    <location>
        <position position="173"/>
    </location>
    <ligand>
        <name>alpha-D-glucose 1-phosphate</name>
        <dbReference type="ChEBI" id="CHEBI:58601"/>
    </ligand>
</feature>
<feature type="binding site" evidence="1">
    <location>
        <begin position="188"/>
        <end position="189"/>
    </location>
    <ligand>
        <name>alpha-D-glucose 1-phosphate</name>
        <dbReference type="ChEBI" id="CHEBI:58601"/>
    </ligand>
</feature>
<feature type="binding site" evidence="1">
    <location>
        <position position="207"/>
    </location>
    <ligand>
        <name>alpha-D-glucose 1-phosphate</name>
        <dbReference type="ChEBI" id="CHEBI:58601"/>
    </ligand>
</feature>
<proteinExistence type="inferred from homology"/>
<evidence type="ECO:0000255" key="1">
    <source>
        <dbReference type="HAMAP-Rule" id="MF_00624"/>
    </source>
</evidence>
<keyword id="KW-0067">ATP-binding</keyword>
<keyword id="KW-0119">Carbohydrate metabolism</keyword>
<keyword id="KW-0320">Glycogen biosynthesis</keyword>
<keyword id="KW-0321">Glycogen metabolism</keyword>
<keyword id="KW-0547">Nucleotide-binding</keyword>
<keyword id="KW-0548">Nucleotidyltransferase</keyword>
<keyword id="KW-1185">Reference proteome</keyword>
<keyword id="KW-0808">Transferase</keyword>